<evidence type="ECO:0000250" key="1"/>
<evidence type="ECO:0000255" key="2">
    <source>
        <dbReference type="PROSITE-ProRule" id="PRU00241"/>
    </source>
</evidence>
<evidence type="ECO:0000305" key="3"/>
<name>RUBR2_CHLTE</name>
<sequence length="52" mass="5746">MEQWKCNICGYIYNPETGDPEGDIPAGTSFESLPDSWMCPVCGAGKEEFTKI</sequence>
<proteinExistence type="inferred from homology"/>
<comment type="function">
    <text evidence="1">Serves as an electron acceptor for pyruvate ferredoxin oxidoreductase (PFOR).</text>
</comment>
<comment type="cofactor">
    <cofactor evidence="1">
        <name>Fe(3+)</name>
        <dbReference type="ChEBI" id="CHEBI:29034"/>
    </cofactor>
    <text evidence="1">Binds 1 Fe(3+) ion per subunit.</text>
</comment>
<comment type="subunit">
    <text evidence="1">Monomer.</text>
</comment>
<comment type="similarity">
    <text evidence="3">Belongs to the rubredoxin family.</text>
</comment>
<protein>
    <recommendedName>
        <fullName>Rubredoxin-2</fullName>
        <shortName>Rd 2</shortName>
    </recommendedName>
</protein>
<reference key="1">
    <citation type="journal article" date="2002" name="Proc. Natl. Acad. Sci. U.S.A.">
        <title>The complete genome sequence of Chlorobium tepidum TLS, a photosynthetic, anaerobic, green-sulfur bacterium.</title>
        <authorList>
            <person name="Eisen J.A."/>
            <person name="Nelson K.E."/>
            <person name="Paulsen I.T."/>
            <person name="Heidelberg J.F."/>
            <person name="Wu M."/>
            <person name="Dodson R.J."/>
            <person name="DeBoy R.T."/>
            <person name="Gwinn M.L."/>
            <person name="Nelson W.C."/>
            <person name="Haft D.H."/>
            <person name="Hickey E.K."/>
            <person name="Peterson J.D."/>
            <person name="Durkin A.S."/>
            <person name="Kolonay J.F."/>
            <person name="Yang F."/>
            <person name="Holt I.E."/>
            <person name="Umayam L.A."/>
            <person name="Mason T.M."/>
            <person name="Brenner M."/>
            <person name="Shea T.P."/>
            <person name="Parksey D.S."/>
            <person name="Nierman W.C."/>
            <person name="Feldblyum T.V."/>
            <person name="Hansen C.L."/>
            <person name="Craven M.B."/>
            <person name="Radune D."/>
            <person name="Vamathevan J.J."/>
            <person name="Khouri H.M."/>
            <person name="White O."/>
            <person name="Gruber T.M."/>
            <person name="Ketchum K.A."/>
            <person name="Venter J.C."/>
            <person name="Tettelin H."/>
            <person name="Bryant D.A."/>
            <person name="Fraser C.M."/>
        </authorList>
    </citation>
    <scope>NUCLEOTIDE SEQUENCE [LARGE SCALE GENOMIC DNA]</scope>
    <source>
        <strain>ATCC 49652 / DSM 12025 / NBRC 103806 / TLS</strain>
    </source>
</reference>
<keyword id="KW-0249">Electron transport</keyword>
<keyword id="KW-0408">Iron</keyword>
<keyword id="KW-0479">Metal-binding</keyword>
<keyword id="KW-1185">Reference proteome</keyword>
<keyword id="KW-0813">Transport</keyword>
<feature type="chain" id="PRO_0000135027" description="Rubredoxin-2">
    <location>
        <begin position="1"/>
        <end position="52"/>
    </location>
</feature>
<feature type="domain" description="Rubredoxin-like" evidence="2">
    <location>
        <begin position="1"/>
        <end position="52"/>
    </location>
</feature>
<feature type="binding site" evidence="2">
    <location>
        <position position="6"/>
    </location>
    <ligand>
        <name>Fe cation</name>
        <dbReference type="ChEBI" id="CHEBI:24875"/>
    </ligand>
</feature>
<feature type="binding site" evidence="2">
    <location>
        <position position="9"/>
    </location>
    <ligand>
        <name>Fe cation</name>
        <dbReference type="ChEBI" id="CHEBI:24875"/>
    </ligand>
</feature>
<feature type="binding site" evidence="2">
    <location>
        <position position="39"/>
    </location>
    <ligand>
        <name>Fe cation</name>
        <dbReference type="ChEBI" id="CHEBI:24875"/>
    </ligand>
</feature>
<feature type="binding site" evidence="2">
    <location>
        <position position="42"/>
    </location>
    <ligand>
        <name>Fe cation</name>
        <dbReference type="ChEBI" id="CHEBI:24875"/>
    </ligand>
</feature>
<gene>
    <name type="primary">rub2</name>
    <name type="synonym">rbr-2</name>
    <name type="ordered locus">CT1101</name>
</gene>
<organism>
    <name type="scientific">Chlorobaculum tepidum (strain ATCC 49652 / DSM 12025 / NBRC 103806 / TLS)</name>
    <name type="common">Chlorobium tepidum</name>
    <dbReference type="NCBI Taxonomy" id="194439"/>
    <lineage>
        <taxon>Bacteria</taxon>
        <taxon>Pseudomonadati</taxon>
        <taxon>Chlorobiota</taxon>
        <taxon>Chlorobiia</taxon>
        <taxon>Chlorobiales</taxon>
        <taxon>Chlorobiaceae</taxon>
        <taxon>Chlorobaculum</taxon>
    </lineage>
</organism>
<dbReference type="EMBL" id="AE006470">
    <property type="protein sequence ID" value="AAM72334.1"/>
    <property type="molecule type" value="Genomic_DNA"/>
</dbReference>
<dbReference type="RefSeq" id="NP_661992.1">
    <property type="nucleotide sequence ID" value="NC_002932.3"/>
</dbReference>
<dbReference type="RefSeq" id="WP_010932779.1">
    <property type="nucleotide sequence ID" value="NC_002932.3"/>
</dbReference>
<dbReference type="SMR" id="P58993"/>
<dbReference type="STRING" id="194439.CT1101"/>
<dbReference type="EnsemblBacteria" id="AAM72334">
    <property type="protein sequence ID" value="AAM72334"/>
    <property type="gene ID" value="CT1101"/>
</dbReference>
<dbReference type="KEGG" id="cte:CT1101"/>
<dbReference type="PATRIC" id="fig|194439.7.peg.1002"/>
<dbReference type="eggNOG" id="COG1773">
    <property type="taxonomic scope" value="Bacteria"/>
</dbReference>
<dbReference type="HOGENOM" id="CLU_128747_3_3_10"/>
<dbReference type="OrthoDB" id="9758182at2"/>
<dbReference type="Proteomes" id="UP000001007">
    <property type="component" value="Chromosome"/>
</dbReference>
<dbReference type="GO" id="GO:0009055">
    <property type="term" value="F:electron transfer activity"/>
    <property type="evidence" value="ECO:0007669"/>
    <property type="project" value="InterPro"/>
</dbReference>
<dbReference type="GO" id="GO:0005506">
    <property type="term" value="F:iron ion binding"/>
    <property type="evidence" value="ECO:0007669"/>
    <property type="project" value="InterPro"/>
</dbReference>
<dbReference type="GO" id="GO:0043448">
    <property type="term" value="P:alkane catabolic process"/>
    <property type="evidence" value="ECO:0007669"/>
    <property type="project" value="TreeGrafter"/>
</dbReference>
<dbReference type="CDD" id="cd00730">
    <property type="entry name" value="rubredoxin"/>
    <property type="match status" value="1"/>
</dbReference>
<dbReference type="FunFam" id="2.20.28.10:FF:000001">
    <property type="entry name" value="Rubredoxin"/>
    <property type="match status" value="1"/>
</dbReference>
<dbReference type="Gene3D" id="2.20.28.10">
    <property type="match status" value="1"/>
</dbReference>
<dbReference type="InterPro" id="IPR024922">
    <property type="entry name" value="Rubredoxin"/>
</dbReference>
<dbReference type="InterPro" id="IPR024934">
    <property type="entry name" value="Rubredoxin-like_dom"/>
</dbReference>
<dbReference type="InterPro" id="IPR024935">
    <property type="entry name" value="Rubredoxin_dom"/>
</dbReference>
<dbReference type="InterPro" id="IPR050526">
    <property type="entry name" value="Rubredoxin_ET"/>
</dbReference>
<dbReference type="InterPro" id="IPR018527">
    <property type="entry name" value="Rubredoxin_Fe_BS"/>
</dbReference>
<dbReference type="PANTHER" id="PTHR47627">
    <property type="entry name" value="RUBREDOXIN"/>
    <property type="match status" value="1"/>
</dbReference>
<dbReference type="PANTHER" id="PTHR47627:SF1">
    <property type="entry name" value="RUBREDOXIN-1-RELATED"/>
    <property type="match status" value="1"/>
</dbReference>
<dbReference type="Pfam" id="PF00301">
    <property type="entry name" value="Rubredoxin"/>
    <property type="match status" value="1"/>
</dbReference>
<dbReference type="PIRSF" id="PIRSF000071">
    <property type="entry name" value="Rubredoxin"/>
    <property type="match status" value="1"/>
</dbReference>
<dbReference type="PRINTS" id="PR00163">
    <property type="entry name" value="RUBREDOXIN"/>
</dbReference>
<dbReference type="SUPFAM" id="SSF57802">
    <property type="entry name" value="Rubredoxin-like"/>
    <property type="match status" value="1"/>
</dbReference>
<dbReference type="PROSITE" id="PS00202">
    <property type="entry name" value="RUBREDOXIN"/>
    <property type="match status" value="1"/>
</dbReference>
<dbReference type="PROSITE" id="PS50903">
    <property type="entry name" value="RUBREDOXIN_LIKE"/>
    <property type="match status" value="1"/>
</dbReference>
<accession>P58993</accession>